<protein>
    <recommendedName>
        <fullName evidence="1">Envelope small membrane protein</fullName>
        <shortName evidence="1">E protein</shortName>
        <shortName evidence="1">sM protein</shortName>
    </recommendedName>
</protein>
<organism>
    <name type="scientific">Avian infectious bronchitis virus (strain KB8523)</name>
    <name type="common">IBV</name>
    <dbReference type="NCBI Taxonomy" id="11126"/>
    <lineage>
        <taxon>Viruses</taxon>
        <taxon>Riboviria</taxon>
        <taxon>Orthornavirae</taxon>
        <taxon>Pisuviricota</taxon>
        <taxon>Pisoniviricetes</taxon>
        <taxon>Nidovirales</taxon>
        <taxon>Cornidovirineae</taxon>
        <taxon>Coronaviridae</taxon>
        <taxon>Orthocoronavirinae</taxon>
        <taxon>Gammacoronavirus</taxon>
        <taxon>Igacovirus</taxon>
        <taxon>Avian coronavirus</taxon>
    </lineage>
</organism>
<dbReference type="EMBL" id="M21515">
    <property type="protein sequence ID" value="AAA66580.1"/>
    <property type="molecule type" value="Genomic_RNA"/>
</dbReference>
<dbReference type="PIR" id="E29249">
    <property type="entry name" value="QQIHI1"/>
</dbReference>
<dbReference type="SMR" id="P19744"/>
<dbReference type="GO" id="GO:0044178">
    <property type="term" value="C:host cell Golgi membrane"/>
    <property type="evidence" value="ECO:0007669"/>
    <property type="project" value="UniProtKB-SubCell"/>
</dbReference>
<dbReference type="GO" id="GO:0016020">
    <property type="term" value="C:membrane"/>
    <property type="evidence" value="ECO:0007669"/>
    <property type="project" value="UniProtKB-UniRule"/>
</dbReference>
<dbReference type="GO" id="GO:0140975">
    <property type="term" value="P:disruption of cellular anatomical structure in another organism"/>
    <property type="evidence" value="ECO:0007669"/>
    <property type="project" value="UniProtKB-UniRule"/>
</dbReference>
<dbReference type="GO" id="GO:0046760">
    <property type="term" value="P:viral budding from Golgi membrane"/>
    <property type="evidence" value="ECO:0007669"/>
    <property type="project" value="UniProtKB-UniRule"/>
</dbReference>
<dbReference type="HAMAP" id="MF_04206">
    <property type="entry name" value="GAMMA_CORONA_E"/>
    <property type="match status" value="1"/>
</dbReference>
<dbReference type="InterPro" id="IPR003873">
    <property type="entry name" value="E_protein_CoV"/>
</dbReference>
<dbReference type="InterPro" id="IPR005296">
    <property type="entry name" value="IBV_3C"/>
</dbReference>
<dbReference type="Pfam" id="PF03620">
    <property type="entry name" value="IBV_3C"/>
    <property type="match status" value="1"/>
</dbReference>
<dbReference type="PROSITE" id="PS51926">
    <property type="entry name" value="COV_E"/>
    <property type="match status" value="1"/>
</dbReference>
<feature type="chain" id="PRO_0000106079" description="Envelope small membrane protein">
    <location>
        <begin position="1"/>
        <end position="109"/>
    </location>
</feature>
<feature type="topological domain" description="Virion surface" evidence="1">
    <location>
        <begin position="1"/>
        <end position="11"/>
    </location>
</feature>
<feature type="transmembrane region" description="Helical" evidence="1">
    <location>
        <begin position="12"/>
        <end position="32"/>
    </location>
</feature>
<feature type="topological domain" description="Intravirion" evidence="1">
    <location>
        <begin position="33"/>
        <end position="109"/>
    </location>
</feature>
<feature type="region of interest" description="Disordered" evidence="2">
    <location>
        <begin position="89"/>
        <end position="109"/>
    </location>
</feature>
<feature type="compositionally biased region" description="Polar residues" evidence="2">
    <location>
        <begin position="90"/>
        <end position="109"/>
    </location>
</feature>
<evidence type="ECO:0000255" key="1">
    <source>
        <dbReference type="HAMAP-Rule" id="MF_04206"/>
    </source>
</evidence>
<evidence type="ECO:0000256" key="2">
    <source>
        <dbReference type="SAM" id="MobiDB-lite"/>
    </source>
</evidence>
<proteinExistence type="inferred from homology"/>
<name>VEMP_IBVK</name>
<keyword id="KW-0053">Apoptosis</keyword>
<keyword id="KW-1040">Host Golgi apparatus</keyword>
<keyword id="KW-1043">Host membrane</keyword>
<keyword id="KW-0472">Membrane</keyword>
<keyword id="KW-0812">Transmembrane</keyword>
<keyword id="KW-1133">Transmembrane helix</keyword>
<comment type="function">
    <text evidence="1">Plays a central role in virus morphogenesis and assembly. Acts as a viroporin and self-assembles in host membranes forming pentameric protein-lipid pores that allow ion transport. Also plays a role in the induction of apoptosis.</text>
</comment>
<comment type="subunit">
    <text evidence="1">Homooligomer. Interacts with the M membrane protein in the budding compartment of the host cell, which is located between endoplasmic reticulum and the Golgi complex. The cytoplasmic tails of both proteins are important for this function. Interacts with Nucleoprotein.</text>
</comment>
<comment type="subcellular location">
    <subcellularLocation>
        <location evidence="1">Host Golgi apparatus membrane</location>
        <topology evidence="1">Single-pass type III membrane protein</topology>
    </subcellularLocation>
    <text evidence="1">The cytoplasmic tail functions as a Golgi complex-targeting signal.</text>
</comment>
<comment type="similarity">
    <text evidence="1">Belongs to the gammacoronaviruses E protein family.</text>
</comment>
<sequence length="109" mass="12300">MTNLLNKSLEENGSFLTAVYIFVGFVALYLLGRALQAFVQAADACCLFWYTWVVVPGAKGTAFVYNHTYGKKLNKPELEAVVVNEFPKNGWNNKNPANFQDVQRNKLYS</sequence>
<organismHost>
    <name type="scientific">Gallus gallus</name>
    <name type="common">Chicken</name>
    <dbReference type="NCBI Taxonomy" id="9031"/>
</organismHost>
<gene>
    <name evidence="1" type="primary">E</name>
    <name type="synonym">sM</name>
    <name type="ORF">3c</name>
</gene>
<accession>P19744</accession>
<reference key="1">
    <citation type="journal article" date="1988" name="Virology">
        <title>Cloning and sequencing of genes encoding structural proteins of avian infectious bronchitis virus.</title>
        <authorList>
            <person name="Sutou S."/>
            <person name="Sato S."/>
            <person name="Okabe T."/>
            <person name="Nakai M."/>
            <person name="Sasaki N."/>
        </authorList>
    </citation>
    <scope>NUCLEOTIDE SEQUENCE [GENOMIC RNA]</scope>
</reference>